<organism>
    <name type="scientific">Staphylococcus aureus (strain JH1)</name>
    <dbReference type="NCBI Taxonomy" id="359787"/>
    <lineage>
        <taxon>Bacteria</taxon>
        <taxon>Bacillati</taxon>
        <taxon>Bacillota</taxon>
        <taxon>Bacilli</taxon>
        <taxon>Bacillales</taxon>
        <taxon>Staphylococcaceae</taxon>
        <taxon>Staphylococcus</taxon>
    </lineage>
</organism>
<feature type="chain" id="PRO_1000083496" description="Oxygen-dependent choline dehydrogenase">
    <location>
        <begin position="1"/>
        <end position="569"/>
    </location>
</feature>
<feature type="active site" description="Proton acceptor" evidence="1">
    <location>
        <position position="475"/>
    </location>
</feature>
<feature type="binding site" evidence="1">
    <location>
        <begin position="9"/>
        <end position="38"/>
    </location>
    <ligand>
        <name>FAD</name>
        <dbReference type="ChEBI" id="CHEBI:57692"/>
    </ligand>
</feature>
<reference key="1">
    <citation type="submission" date="2007-06" db="EMBL/GenBank/DDBJ databases">
        <title>Complete sequence of chromosome of Staphylococcus aureus subsp. aureus JH1.</title>
        <authorList>
            <consortium name="US DOE Joint Genome Institute"/>
            <person name="Copeland A."/>
            <person name="Lucas S."/>
            <person name="Lapidus A."/>
            <person name="Barry K."/>
            <person name="Detter J.C."/>
            <person name="Glavina del Rio T."/>
            <person name="Hammon N."/>
            <person name="Israni S."/>
            <person name="Dalin E."/>
            <person name="Tice H."/>
            <person name="Pitluck S."/>
            <person name="Chain P."/>
            <person name="Malfatti S."/>
            <person name="Shin M."/>
            <person name="Vergez L."/>
            <person name="Schmutz J."/>
            <person name="Larimer F."/>
            <person name="Land M."/>
            <person name="Hauser L."/>
            <person name="Kyrpides N."/>
            <person name="Ivanova N."/>
            <person name="Tomasz A."/>
            <person name="Richardson P."/>
        </authorList>
    </citation>
    <scope>NUCLEOTIDE SEQUENCE [LARGE SCALE GENOMIC DNA]</scope>
    <source>
        <strain>JH1</strain>
    </source>
</reference>
<proteinExistence type="inferred from homology"/>
<name>BETA_STAA2</name>
<accession>A6U4Z2</accession>
<keyword id="KW-0274">FAD</keyword>
<keyword id="KW-0285">Flavoprotein</keyword>
<keyword id="KW-0520">NAD</keyword>
<keyword id="KW-0560">Oxidoreductase</keyword>
<protein>
    <recommendedName>
        <fullName evidence="1">Oxygen-dependent choline dehydrogenase</fullName>
        <shortName evidence="1">CDH</shortName>
        <shortName evidence="1">CHD</shortName>
        <ecNumber evidence="1">1.1.99.1</ecNumber>
    </recommendedName>
    <alternativeName>
        <fullName evidence="1">Betaine aldehyde dehydrogenase</fullName>
        <shortName evidence="1">BADH</shortName>
        <ecNumber evidence="1">1.2.1.8</ecNumber>
    </alternativeName>
</protein>
<dbReference type="EC" id="1.1.99.1" evidence="1"/>
<dbReference type="EC" id="1.2.1.8" evidence="1"/>
<dbReference type="EMBL" id="CP000736">
    <property type="protein sequence ID" value="ABR53510.1"/>
    <property type="molecule type" value="Genomic_DNA"/>
</dbReference>
<dbReference type="SMR" id="A6U4Z2"/>
<dbReference type="KEGG" id="sah:SaurJH1_2688"/>
<dbReference type="HOGENOM" id="CLU_002865_7_1_9"/>
<dbReference type="UniPathway" id="UPA00529">
    <property type="reaction ID" value="UER00385"/>
</dbReference>
<dbReference type="GO" id="GO:0016020">
    <property type="term" value="C:membrane"/>
    <property type="evidence" value="ECO:0007669"/>
    <property type="project" value="TreeGrafter"/>
</dbReference>
<dbReference type="GO" id="GO:0008802">
    <property type="term" value="F:betaine-aldehyde dehydrogenase (NAD+) activity"/>
    <property type="evidence" value="ECO:0007669"/>
    <property type="project" value="UniProtKB-EC"/>
</dbReference>
<dbReference type="GO" id="GO:0008812">
    <property type="term" value="F:choline dehydrogenase activity"/>
    <property type="evidence" value="ECO:0007669"/>
    <property type="project" value="UniProtKB-UniRule"/>
</dbReference>
<dbReference type="GO" id="GO:0050660">
    <property type="term" value="F:flavin adenine dinucleotide binding"/>
    <property type="evidence" value="ECO:0007669"/>
    <property type="project" value="InterPro"/>
</dbReference>
<dbReference type="GO" id="GO:0019285">
    <property type="term" value="P:glycine betaine biosynthetic process from choline"/>
    <property type="evidence" value="ECO:0007669"/>
    <property type="project" value="UniProtKB-UniRule"/>
</dbReference>
<dbReference type="Gene3D" id="3.50.50.60">
    <property type="entry name" value="FAD/NAD(P)-binding domain"/>
    <property type="match status" value="1"/>
</dbReference>
<dbReference type="Gene3D" id="3.30.560.10">
    <property type="entry name" value="Glucose Oxidase, domain 3"/>
    <property type="match status" value="1"/>
</dbReference>
<dbReference type="HAMAP" id="MF_00750">
    <property type="entry name" value="Choline_dehydrogen"/>
    <property type="match status" value="1"/>
</dbReference>
<dbReference type="InterPro" id="IPR011533">
    <property type="entry name" value="BetA"/>
</dbReference>
<dbReference type="InterPro" id="IPR036188">
    <property type="entry name" value="FAD/NAD-bd_sf"/>
</dbReference>
<dbReference type="InterPro" id="IPR012132">
    <property type="entry name" value="GMC_OxRdtase"/>
</dbReference>
<dbReference type="InterPro" id="IPR000172">
    <property type="entry name" value="GMC_OxRdtase_N"/>
</dbReference>
<dbReference type="InterPro" id="IPR007867">
    <property type="entry name" value="GMC_OxRtase_C"/>
</dbReference>
<dbReference type="NCBIfam" id="TIGR01810">
    <property type="entry name" value="betA"/>
    <property type="match status" value="1"/>
</dbReference>
<dbReference type="NCBIfam" id="NF002550">
    <property type="entry name" value="PRK02106.1"/>
    <property type="match status" value="1"/>
</dbReference>
<dbReference type="PANTHER" id="PTHR11552:SF147">
    <property type="entry name" value="CHOLINE DEHYDROGENASE, MITOCHONDRIAL"/>
    <property type="match status" value="1"/>
</dbReference>
<dbReference type="PANTHER" id="PTHR11552">
    <property type="entry name" value="GLUCOSE-METHANOL-CHOLINE GMC OXIDOREDUCTASE"/>
    <property type="match status" value="1"/>
</dbReference>
<dbReference type="Pfam" id="PF05199">
    <property type="entry name" value="GMC_oxred_C"/>
    <property type="match status" value="1"/>
</dbReference>
<dbReference type="Pfam" id="PF00732">
    <property type="entry name" value="GMC_oxred_N"/>
    <property type="match status" value="1"/>
</dbReference>
<dbReference type="PIRSF" id="PIRSF000137">
    <property type="entry name" value="Alcohol_oxidase"/>
    <property type="match status" value="1"/>
</dbReference>
<dbReference type="SUPFAM" id="SSF54373">
    <property type="entry name" value="FAD-linked reductases, C-terminal domain"/>
    <property type="match status" value="1"/>
</dbReference>
<dbReference type="SUPFAM" id="SSF51905">
    <property type="entry name" value="FAD/NAD(P)-binding domain"/>
    <property type="match status" value="1"/>
</dbReference>
<dbReference type="PROSITE" id="PS00623">
    <property type="entry name" value="GMC_OXRED_1"/>
    <property type="match status" value="1"/>
</dbReference>
<dbReference type="PROSITE" id="PS00624">
    <property type="entry name" value="GMC_OXRED_2"/>
    <property type="match status" value="1"/>
</dbReference>
<evidence type="ECO:0000255" key="1">
    <source>
        <dbReference type="HAMAP-Rule" id="MF_00750"/>
    </source>
</evidence>
<comment type="function">
    <text evidence="1">Involved in the biosynthesis of the osmoprotectant glycine betaine. Catalyzes the oxidation of choline to betaine aldehyde and betaine aldehyde to glycine betaine at the same rate.</text>
</comment>
<comment type="catalytic activity">
    <reaction evidence="1">
        <text>choline + A = betaine aldehyde + AH2</text>
        <dbReference type="Rhea" id="RHEA:17433"/>
        <dbReference type="ChEBI" id="CHEBI:13193"/>
        <dbReference type="ChEBI" id="CHEBI:15354"/>
        <dbReference type="ChEBI" id="CHEBI:15710"/>
        <dbReference type="ChEBI" id="CHEBI:17499"/>
        <dbReference type="EC" id="1.1.99.1"/>
    </reaction>
</comment>
<comment type="catalytic activity">
    <reaction evidence="1">
        <text>betaine aldehyde + NAD(+) + H2O = glycine betaine + NADH + 2 H(+)</text>
        <dbReference type="Rhea" id="RHEA:15305"/>
        <dbReference type="ChEBI" id="CHEBI:15377"/>
        <dbReference type="ChEBI" id="CHEBI:15378"/>
        <dbReference type="ChEBI" id="CHEBI:15710"/>
        <dbReference type="ChEBI" id="CHEBI:17750"/>
        <dbReference type="ChEBI" id="CHEBI:57540"/>
        <dbReference type="ChEBI" id="CHEBI:57945"/>
        <dbReference type="EC" id="1.2.1.8"/>
    </reaction>
</comment>
<comment type="cofactor">
    <cofactor evidence="1">
        <name>FAD</name>
        <dbReference type="ChEBI" id="CHEBI:57692"/>
    </cofactor>
</comment>
<comment type="pathway">
    <text evidence="1">Amine and polyamine biosynthesis; betaine biosynthesis via choline pathway; betaine aldehyde from choline (cytochrome c reductase route): step 1/1.</text>
</comment>
<comment type="similarity">
    <text evidence="1">Belongs to the GMC oxidoreductase family.</text>
</comment>
<gene>
    <name evidence="1" type="primary">betA</name>
    <name type="ordered locus">SaurJH1_2688</name>
</gene>
<sequence>MSNKNKSYDYVIIGGGSAGSVLGNRLSEDKDKEVLVLEAGRSDYFWDLFIQMPAALMFPSGNKFYDWIYSTDEEPHMGGRKVAHARGKVLGGSSSINGMIYQRGNPMDYEGWAEPEGMETWDFAHCLPYFKKLEKTYGAAPYDKFRGHDGPIKLKRGPATNPLFQSFFDAGVEAGYHKTPDVNGFRQEGFGPFDSQVHRGRRMSASRAYLHPAMKRKNLTVETRAFVTEIHYEGRRATGVTYKKNGKLHTIDANEVILSGGAFNTPQLLQLSGIGDSEFLKSKGIEPRVHLPGVGENFEDHLEVYIQHKCKEPVSLQPSLDIKRMPFIGLQWIFTRTGAAASNHFEGGGFVRSNNEVDYPNLMFHFLPIAVRYDGQKAAVAHGYQVHVGPMYSNSRGSLKIKSKDPFEKPSIRFNYLSTEEDKKEWVEAIRVARNILSQKAMDPFNGGEISPGPEVQTDEEILDWVRRDGETALHPSCSAKMGPASDPMAVVDPLTMKVHGMENLRVVDASAMPRTTNGNIHAPVLMLAEKAADIIRGRKPLEPQYIDYYKHGVHDENEGAIEVKPYAK</sequence>